<gene>
    <name evidence="1" type="primary">hisB</name>
    <name type="ordered locus">MT1637</name>
</gene>
<evidence type="ECO:0000255" key="1">
    <source>
        <dbReference type="HAMAP-Rule" id="MF_00076"/>
    </source>
</evidence>
<dbReference type="EC" id="4.2.1.19" evidence="1"/>
<dbReference type="EMBL" id="AE000516">
    <property type="protein sequence ID" value="AAK45905.1"/>
    <property type="molecule type" value="Genomic_DNA"/>
</dbReference>
<dbReference type="PIR" id="C70544">
    <property type="entry name" value="C70544"/>
</dbReference>
<dbReference type="RefSeq" id="WP_003407950.1">
    <property type="nucleotide sequence ID" value="NZ_KK341227.1"/>
</dbReference>
<dbReference type="SMR" id="P9WML8"/>
<dbReference type="KEGG" id="mtc:MT1637"/>
<dbReference type="PATRIC" id="fig|83331.31.peg.1759"/>
<dbReference type="HOGENOM" id="CLU_044308_3_0_11"/>
<dbReference type="UniPathway" id="UPA00031">
    <property type="reaction ID" value="UER00011"/>
</dbReference>
<dbReference type="Proteomes" id="UP000001020">
    <property type="component" value="Chromosome"/>
</dbReference>
<dbReference type="GO" id="GO:0005737">
    <property type="term" value="C:cytoplasm"/>
    <property type="evidence" value="ECO:0007669"/>
    <property type="project" value="UniProtKB-SubCell"/>
</dbReference>
<dbReference type="GO" id="GO:0004424">
    <property type="term" value="F:imidazoleglycerol-phosphate dehydratase activity"/>
    <property type="evidence" value="ECO:0007669"/>
    <property type="project" value="UniProtKB-UniRule"/>
</dbReference>
<dbReference type="GO" id="GO:0000105">
    <property type="term" value="P:L-histidine biosynthetic process"/>
    <property type="evidence" value="ECO:0007669"/>
    <property type="project" value="UniProtKB-UniRule"/>
</dbReference>
<dbReference type="CDD" id="cd07914">
    <property type="entry name" value="IGPD"/>
    <property type="match status" value="1"/>
</dbReference>
<dbReference type="FunFam" id="3.30.230.40:FF:000001">
    <property type="entry name" value="Imidazoleglycerol-phosphate dehydratase HisB"/>
    <property type="match status" value="1"/>
</dbReference>
<dbReference type="FunFam" id="3.30.230.40:FF:000003">
    <property type="entry name" value="Imidazoleglycerol-phosphate dehydratase HisB"/>
    <property type="match status" value="1"/>
</dbReference>
<dbReference type="Gene3D" id="3.30.230.40">
    <property type="entry name" value="Imidazole glycerol phosphate dehydratase, domain 1"/>
    <property type="match status" value="2"/>
</dbReference>
<dbReference type="HAMAP" id="MF_00076">
    <property type="entry name" value="HisB"/>
    <property type="match status" value="1"/>
</dbReference>
<dbReference type="InterPro" id="IPR038494">
    <property type="entry name" value="IGPD_sf"/>
</dbReference>
<dbReference type="InterPro" id="IPR000807">
    <property type="entry name" value="ImidazoleglycerolP_deHydtase"/>
</dbReference>
<dbReference type="InterPro" id="IPR020565">
    <property type="entry name" value="ImidazoleglycerP_deHydtase_CS"/>
</dbReference>
<dbReference type="InterPro" id="IPR020568">
    <property type="entry name" value="Ribosomal_Su5_D2-typ_SF"/>
</dbReference>
<dbReference type="NCBIfam" id="NF002110">
    <property type="entry name" value="PRK00951.1-6"/>
    <property type="match status" value="1"/>
</dbReference>
<dbReference type="NCBIfam" id="NF002111">
    <property type="entry name" value="PRK00951.2-1"/>
    <property type="match status" value="1"/>
</dbReference>
<dbReference type="NCBIfam" id="NF002114">
    <property type="entry name" value="PRK00951.2-4"/>
    <property type="match status" value="1"/>
</dbReference>
<dbReference type="PANTHER" id="PTHR23133:SF2">
    <property type="entry name" value="IMIDAZOLEGLYCEROL-PHOSPHATE DEHYDRATASE"/>
    <property type="match status" value="1"/>
</dbReference>
<dbReference type="PANTHER" id="PTHR23133">
    <property type="entry name" value="IMIDAZOLEGLYCEROL-PHOSPHATE DEHYDRATASE HIS7"/>
    <property type="match status" value="1"/>
</dbReference>
<dbReference type="Pfam" id="PF00475">
    <property type="entry name" value="IGPD"/>
    <property type="match status" value="1"/>
</dbReference>
<dbReference type="SUPFAM" id="SSF54211">
    <property type="entry name" value="Ribosomal protein S5 domain 2-like"/>
    <property type="match status" value="2"/>
</dbReference>
<dbReference type="PROSITE" id="PS00954">
    <property type="entry name" value="IGP_DEHYDRATASE_1"/>
    <property type="match status" value="1"/>
</dbReference>
<dbReference type="PROSITE" id="PS00955">
    <property type="entry name" value="IGP_DEHYDRATASE_2"/>
    <property type="match status" value="1"/>
</dbReference>
<feature type="chain" id="PRO_0000427281" description="Imidazoleglycerol-phosphate dehydratase">
    <location>
        <begin position="1"/>
        <end position="210"/>
    </location>
</feature>
<proteinExistence type="inferred from homology"/>
<accession>P9WML8</accession>
<accession>L0T8R8</accession>
<accession>O06590</accession>
<accession>P64368</accession>
<sequence length="210" mass="22770">MTTTQTAKASRRARIERRTRESDIVIELDLDGTGQVAVDTGVPFYDHMLTALGSHASFDLTVRATGDVEIEAHHTIEDTAIALGTALGQALGDKRGIRRFGDAFIPMDETLAHAAVDLSGRPYCVHTGEPDHLQHTTIAGSSVPYHTVINRHVFESLAANARIALHVRVLYGRDPHHITEAQYKAVARALRQAVEPDPRVSGVPSTKGAL</sequence>
<keyword id="KW-0028">Amino-acid biosynthesis</keyword>
<keyword id="KW-0963">Cytoplasm</keyword>
<keyword id="KW-0368">Histidine biosynthesis</keyword>
<keyword id="KW-0456">Lyase</keyword>
<keyword id="KW-1185">Reference proteome</keyword>
<name>HIS7_MYCTO</name>
<protein>
    <recommendedName>
        <fullName evidence="1">Imidazoleglycerol-phosphate dehydratase</fullName>
        <shortName evidence="1">IGPD</shortName>
        <ecNumber evidence="1">4.2.1.19</ecNumber>
    </recommendedName>
</protein>
<organism>
    <name type="scientific">Mycobacterium tuberculosis (strain CDC 1551 / Oshkosh)</name>
    <dbReference type="NCBI Taxonomy" id="83331"/>
    <lineage>
        <taxon>Bacteria</taxon>
        <taxon>Bacillati</taxon>
        <taxon>Actinomycetota</taxon>
        <taxon>Actinomycetes</taxon>
        <taxon>Mycobacteriales</taxon>
        <taxon>Mycobacteriaceae</taxon>
        <taxon>Mycobacterium</taxon>
        <taxon>Mycobacterium tuberculosis complex</taxon>
    </lineage>
</organism>
<reference key="1">
    <citation type="journal article" date="2002" name="J. Bacteriol.">
        <title>Whole-genome comparison of Mycobacterium tuberculosis clinical and laboratory strains.</title>
        <authorList>
            <person name="Fleischmann R.D."/>
            <person name="Alland D."/>
            <person name="Eisen J.A."/>
            <person name="Carpenter L."/>
            <person name="White O."/>
            <person name="Peterson J.D."/>
            <person name="DeBoy R.T."/>
            <person name="Dodson R.J."/>
            <person name="Gwinn M.L."/>
            <person name="Haft D.H."/>
            <person name="Hickey E.K."/>
            <person name="Kolonay J.F."/>
            <person name="Nelson W.C."/>
            <person name="Umayam L.A."/>
            <person name="Ermolaeva M.D."/>
            <person name="Salzberg S.L."/>
            <person name="Delcher A."/>
            <person name="Utterback T.R."/>
            <person name="Weidman J.F."/>
            <person name="Khouri H.M."/>
            <person name="Gill J."/>
            <person name="Mikula A."/>
            <person name="Bishai W."/>
            <person name="Jacobs W.R. Jr."/>
            <person name="Venter J.C."/>
            <person name="Fraser C.M."/>
        </authorList>
    </citation>
    <scope>NUCLEOTIDE SEQUENCE [LARGE SCALE GENOMIC DNA]</scope>
    <source>
        <strain>CDC 1551 / Oshkosh</strain>
    </source>
</reference>
<comment type="catalytic activity">
    <reaction evidence="1">
        <text>D-erythro-1-(imidazol-4-yl)glycerol 3-phosphate = 3-(imidazol-4-yl)-2-oxopropyl phosphate + H2O</text>
        <dbReference type="Rhea" id="RHEA:11040"/>
        <dbReference type="ChEBI" id="CHEBI:15377"/>
        <dbReference type="ChEBI" id="CHEBI:57766"/>
        <dbReference type="ChEBI" id="CHEBI:58278"/>
        <dbReference type="EC" id="4.2.1.19"/>
    </reaction>
</comment>
<comment type="pathway">
    <text evidence="1">Amino-acid biosynthesis; L-histidine biosynthesis; L-histidine from 5-phospho-alpha-D-ribose 1-diphosphate: step 6/9.</text>
</comment>
<comment type="subcellular location">
    <subcellularLocation>
        <location evidence="1">Cytoplasm</location>
    </subcellularLocation>
</comment>
<comment type="similarity">
    <text evidence="1">Belongs to the imidazoleglycerol-phosphate dehydratase family.</text>
</comment>